<accession>P44888</accession>
<name>SLT_HAEIN</name>
<feature type="signal peptide" evidence="2">
    <location>
        <begin position="1"/>
        <end position="19"/>
    </location>
</feature>
<feature type="chain" id="PRO_0000032780" description="Putative soluble lytic murein transglycosylase">
    <location>
        <begin position="20"/>
        <end position="593"/>
    </location>
</feature>
<feature type="region of interest" description="Disordered" evidence="3">
    <location>
        <begin position="152"/>
        <end position="176"/>
    </location>
</feature>
<feature type="region of interest" description="Slt-type domain">
    <location>
        <begin position="440"/>
        <end position="529"/>
    </location>
</feature>
<feature type="compositionally biased region" description="Basic and acidic residues" evidence="3">
    <location>
        <begin position="159"/>
        <end position="168"/>
    </location>
</feature>
<feature type="active site" evidence="4">
    <location>
        <position position="453"/>
    </location>
</feature>
<reference key="1">
    <citation type="journal article" date="1995" name="Science">
        <title>Whole-genome random sequencing and assembly of Haemophilus influenzae Rd.</title>
        <authorList>
            <person name="Fleischmann R.D."/>
            <person name="Adams M.D."/>
            <person name="White O."/>
            <person name="Clayton R.A."/>
            <person name="Kirkness E.F."/>
            <person name="Kerlavage A.R."/>
            <person name="Bult C.J."/>
            <person name="Tomb J.-F."/>
            <person name="Dougherty B.A."/>
            <person name="Merrick J.M."/>
            <person name="McKenney K."/>
            <person name="Sutton G.G."/>
            <person name="FitzHugh W."/>
            <person name="Fields C.A."/>
            <person name="Gocayne J.D."/>
            <person name="Scott J.D."/>
            <person name="Shirley R."/>
            <person name="Liu L.-I."/>
            <person name="Glodek A."/>
            <person name="Kelley J.M."/>
            <person name="Weidman J.F."/>
            <person name="Phillips C.A."/>
            <person name="Spriggs T."/>
            <person name="Hedblom E."/>
            <person name="Cotton M.D."/>
            <person name="Utterback T.R."/>
            <person name="Hanna M.C."/>
            <person name="Nguyen D.T."/>
            <person name="Saudek D.M."/>
            <person name="Brandon R.C."/>
            <person name="Fine L.D."/>
            <person name="Fritchman J.L."/>
            <person name="Fuhrmann J.L."/>
            <person name="Geoghagen N.S.M."/>
            <person name="Gnehm C.L."/>
            <person name="McDonald L.A."/>
            <person name="Small K.V."/>
            <person name="Fraser C.M."/>
            <person name="Smith H.O."/>
            <person name="Venter J.C."/>
        </authorList>
    </citation>
    <scope>NUCLEOTIDE SEQUENCE [LARGE SCALE GENOMIC DNA]</scope>
    <source>
        <strain>ATCC 51907 / DSM 11121 / KW20 / Rd</strain>
    </source>
</reference>
<comment type="function">
    <text evidence="1">Murein-degrading enzyme. May play a role in recycling of muropeptides during cell elongation and/or cell division (By similarity).</text>
</comment>
<comment type="catalytic activity">
    <reaction>
        <text>Exolytic cleavage of the (1-&gt;4)-beta-glycosidic linkage between N-acetylmuramic acid (MurNAc) and N-acetylglucosamine (GlcNAc) residues in peptidoglycan, from either the reducing or the non-reducing ends of the peptidoglycan chains, with concomitant formation of a 1,6-anhydrobond in the MurNAc residue.</text>
        <dbReference type="EC" id="4.2.2.n1"/>
    </reaction>
</comment>
<comment type="subcellular location">
    <subcellularLocation>
        <location evidence="4">Periplasm</location>
    </subcellularLocation>
</comment>
<comment type="similarity">
    <text evidence="4">Belongs to the transglycosylase Slt family.</text>
</comment>
<protein>
    <recommendedName>
        <fullName>Putative soluble lytic murein transglycosylase</fullName>
        <ecNumber>4.2.2.n1</ecNumber>
    </recommendedName>
    <alternativeName>
        <fullName>Peptidoglycan lytic exotransglycosylase</fullName>
    </alternativeName>
</protein>
<evidence type="ECO:0000250" key="1"/>
<evidence type="ECO:0000255" key="2"/>
<evidence type="ECO:0000256" key="3">
    <source>
        <dbReference type="SAM" id="MobiDB-lite"/>
    </source>
</evidence>
<evidence type="ECO:0000305" key="4"/>
<gene>
    <name type="primary">slt</name>
    <name type="ordered locus">HI_0829</name>
</gene>
<keyword id="KW-0961">Cell wall biogenesis/degradation</keyword>
<keyword id="KW-0456">Lyase</keyword>
<keyword id="KW-0574">Periplasm</keyword>
<keyword id="KW-1185">Reference proteome</keyword>
<keyword id="KW-0732">Signal</keyword>
<dbReference type="EC" id="4.2.2.n1"/>
<dbReference type="EMBL" id="L42023">
    <property type="protein sequence ID" value="AAC22487.1"/>
    <property type="molecule type" value="Genomic_DNA"/>
</dbReference>
<dbReference type="PIR" id="C64097">
    <property type="entry name" value="C64097"/>
</dbReference>
<dbReference type="RefSeq" id="NP_438989.1">
    <property type="nucleotide sequence ID" value="NC_000907.1"/>
</dbReference>
<dbReference type="SMR" id="P44888"/>
<dbReference type="STRING" id="71421.HI_0829"/>
<dbReference type="CAZy" id="GH23">
    <property type="family name" value="Glycoside Hydrolase Family 23"/>
</dbReference>
<dbReference type="EnsemblBacteria" id="AAC22487">
    <property type="protein sequence ID" value="AAC22487"/>
    <property type="gene ID" value="HI_0829"/>
</dbReference>
<dbReference type="KEGG" id="hin:HI_0829"/>
<dbReference type="PATRIC" id="fig|71421.8.peg.870"/>
<dbReference type="eggNOG" id="COG0741">
    <property type="taxonomic scope" value="Bacteria"/>
</dbReference>
<dbReference type="HOGENOM" id="CLU_019016_1_0_6"/>
<dbReference type="OrthoDB" id="92254at2"/>
<dbReference type="PhylomeDB" id="P44888"/>
<dbReference type="BioCyc" id="HINF71421:G1GJ1-870-MONOMER"/>
<dbReference type="Proteomes" id="UP000000579">
    <property type="component" value="Chromosome"/>
</dbReference>
<dbReference type="GO" id="GO:0016020">
    <property type="term" value="C:membrane"/>
    <property type="evidence" value="ECO:0007669"/>
    <property type="project" value="InterPro"/>
</dbReference>
<dbReference type="GO" id="GO:0042597">
    <property type="term" value="C:periplasmic space"/>
    <property type="evidence" value="ECO:0007669"/>
    <property type="project" value="UniProtKB-SubCell"/>
</dbReference>
<dbReference type="GO" id="GO:0004553">
    <property type="term" value="F:hydrolase activity, hydrolyzing O-glycosyl compounds"/>
    <property type="evidence" value="ECO:0007669"/>
    <property type="project" value="InterPro"/>
</dbReference>
<dbReference type="GO" id="GO:0008933">
    <property type="term" value="F:peptidoglycan lytic transglycosylase activity"/>
    <property type="evidence" value="ECO:0007669"/>
    <property type="project" value="InterPro"/>
</dbReference>
<dbReference type="GO" id="GO:0071555">
    <property type="term" value="P:cell wall organization"/>
    <property type="evidence" value="ECO:0007669"/>
    <property type="project" value="UniProtKB-KW"/>
</dbReference>
<dbReference type="GO" id="GO:0000270">
    <property type="term" value="P:peptidoglycan metabolic process"/>
    <property type="evidence" value="ECO:0007669"/>
    <property type="project" value="InterPro"/>
</dbReference>
<dbReference type="CDD" id="cd13401">
    <property type="entry name" value="Slt70-like"/>
    <property type="match status" value="1"/>
</dbReference>
<dbReference type="Gene3D" id="1.10.530.10">
    <property type="match status" value="1"/>
</dbReference>
<dbReference type="Gene3D" id="1.25.20.10">
    <property type="entry name" value="Bacterial muramidases"/>
    <property type="match status" value="1"/>
</dbReference>
<dbReference type="Gene3D" id="1.10.1240.20">
    <property type="entry name" value="Lytic transglycosylase, superhelical linker domain"/>
    <property type="match status" value="1"/>
</dbReference>
<dbReference type="InterPro" id="IPR023346">
    <property type="entry name" value="Lysozyme-like_dom_sf"/>
</dbReference>
<dbReference type="InterPro" id="IPR037061">
    <property type="entry name" value="Lytic_TGlycoase_superhlx_L_sf"/>
</dbReference>
<dbReference type="InterPro" id="IPR012289">
    <property type="entry name" value="Lytic_TGlycosylase_superhlx_L"/>
</dbReference>
<dbReference type="InterPro" id="IPR008939">
    <property type="entry name" value="Lytic_TGlycosylase_superhlx_U"/>
</dbReference>
<dbReference type="InterPro" id="IPR000189">
    <property type="entry name" value="Transglyc_AS"/>
</dbReference>
<dbReference type="InterPro" id="IPR008258">
    <property type="entry name" value="Transglycosylase_SLT_dom_1"/>
</dbReference>
<dbReference type="PANTHER" id="PTHR37423:SF5">
    <property type="entry name" value="SOLUBLE LYTIC MUREIN TRANSGLYCOSYLASE"/>
    <property type="match status" value="1"/>
</dbReference>
<dbReference type="PANTHER" id="PTHR37423">
    <property type="entry name" value="SOLUBLE LYTIC MUREIN TRANSGLYCOSYLASE-RELATED"/>
    <property type="match status" value="1"/>
</dbReference>
<dbReference type="Pfam" id="PF01464">
    <property type="entry name" value="SLT"/>
    <property type="match status" value="1"/>
</dbReference>
<dbReference type="Pfam" id="PF14718">
    <property type="entry name" value="SLT_L"/>
    <property type="match status" value="1"/>
</dbReference>
<dbReference type="SUPFAM" id="SSF48435">
    <property type="entry name" value="Bacterial muramidases"/>
    <property type="match status" value="1"/>
</dbReference>
<dbReference type="SUPFAM" id="SSF53955">
    <property type="entry name" value="Lysozyme-like"/>
    <property type="match status" value="1"/>
</dbReference>
<dbReference type="PROSITE" id="PS00922">
    <property type="entry name" value="TRANSGLYCOSYLASE"/>
    <property type="match status" value="1"/>
</dbReference>
<sequence>MKKVALISLCIFTALSAFADSPNTATASINLEQEKQNWELAQHQDYLKRLKQREVFLQVEGLLKSAVKKQQFSEATQNITKTLIDSLQGYPLQYDLLARFWETKIAFLQNDDIQGRQQAINELNALVQQNYPFVTPAFQALLQKLSTLNEQQTSATSDNAKENNRVQKEQNQVENPKQLAEIVRKSDPNTLDKTVLIDAFPRYLKTLPEQMNNLSFESYQKWANTWQLSEDEIKQWKIAFLNRFFDNENTDFQKWRDEQIRQLQTDNLTERRLRMAIWQKTELTSWLNLLSAESKSKQEWRYWEAKQDILKNTKKLTALSKERGFYPMLAATQLKQAYQLNVPIAPSFTQAEQLPFKQVFAMITELRELGRNGLAKQRWRILLDNVDFTTQLKLSEYAKNQQWFELAVDASIVAKAWDYLSLRLPNAYSEYFNAALQNLNISKTFAMAIARQESAWNPMAQSSANARGLMQLLPSTAKLTAENNQLPYQGEQDLFKPLNNILLGTAHLNELNGKYPNNRILIAAAYNAGANRVGKWLSRASGKLALDEFVASIPFYETRGYVQNVVAYDFYYQILQNKENPQIFSQEELNRLY</sequence>
<proteinExistence type="inferred from homology"/>
<organism>
    <name type="scientific">Haemophilus influenzae (strain ATCC 51907 / DSM 11121 / KW20 / Rd)</name>
    <dbReference type="NCBI Taxonomy" id="71421"/>
    <lineage>
        <taxon>Bacteria</taxon>
        <taxon>Pseudomonadati</taxon>
        <taxon>Pseudomonadota</taxon>
        <taxon>Gammaproteobacteria</taxon>
        <taxon>Pasteurellales</taxon>
        <taxon>Pasteurellaceae</taxon>
        <taxon>Haemophilus</taxon>
    </lineage>
</organism>